<comment type="function">
    <text evidence="4 5 6 7 11">Component of the small ribosomal subunit (PubMed:23873042, PubMed:25601755, PubMed:26245381, PubMed:27863242, PubMed:30517857). The ribosome is a large ribonucleoprotein complex responsible for the synthesis of proteins in the cell (PubMed:23873042, PubMed:25601755, PubMed:26245381, PubMed:27863242, PubMed:30517857).</text>
</comment>
<comment type="subunit">
    <text evidence="4 5 6 7 8 9 10 11 12 13 14 15 16 17 18 19">Component of the small ribosomal subunit.</text>
</comment>
<comment type="subcellular location">
    <subcellularLocation>
        <location evidence="4 5 6 7 8 9 10 11 12 13 14 15 16 17 18 19">Cytoplasm</location>
    </subcellularLocation>
</comment>
<comment type="similarity">
    <text evidence="20">Belongs to the eukaryotic ribosomal protein eS25 family.</text>
</comment>
<proteinExistence type="evidence at protein level"/>
<name>RS25_RABIT</name>
<gene>
    <name type="primary">RPS25</name>
</gene>
<keyword id="KW-0002">3D-structure</keyword>
<keyword id="KW-0007">Acetylation</keyword>
<keyword id="KW-0963">Cytoplasm</keyword>
<keyword id="KW-1185">Reference proteome</keyword>
<keyword id="KW-0687">Ribonucleoprotein</keyword>
<keyword id="KW-0689">Ribosomal protein</keyword>
<dbReference type="PDB" id="3JAG">
    <property type="method" value="EM"/>
    <property type="resolution" value="3.65 A"/>
    <property type="chains" value="ZZ=40-114"/>
</dbReference>
<dbReference type="PDB" id="3JAH">
    <property type="method" value="EM"/>
    <property type="resolution" value="3.45 A"/>
    <property type="chains" value="ZZ=40-114"/>
</dbReference>
<dbReference type="PDB" id="3JAI">
    <property type="method" value="EM"/>
    <property type="resolution" value="3.65 A"/>
    <property type="chains" value="ZZ=40-114"/>
</dbReference>
<dbReference type="PDB" id="4D5L">
    <property type="method" value="EM"/>
    <property type="resolution" value="9.00 A"/>
    <property type="chains" value="Z=1-124"/>
</dbReference>
<dbReference type="PDB" id="4D61">
    <property type="method" value="EM"/>
    <property type="resolution" value="9.00 A"/>
    <property type="chains" value="Z=1-124"/>
</dbReference>
<dbReference type="PDB" id="4KZX">
    <property type="method" value="X-ray"/>
    <property type="resolution" value="7.81 A"/>
    <property type="chains" value="Z=1-124"/>
</dbReference>
<dbReference type="PDB" id="4KZY">
    <property type="method" value="X-ray"/>
    <property type="resolution" value="7.01 A"/>
    <property type="chains" value="Z=1-124"/>
</dbReference>
<dbReference type="PDB" id="4KZZ">
    <property type="method" value="X-ray"/>
    <property type="resolution" value="7.03 A"/>
    <property type="chains" value="Z=1-124"/>
</dbReference>
<dbReference type="PDB" id="5K0Y">
    <property type="method" value="EM"/>
    <property type="resolution" value="5.80 A"/>
    <property type="chains" value="W=40-114"/>
</dbReference>
<dbReference type="PDB" id="5LZS">
    <property type="method" value="EM"/>
    <property type="resolution" value="3.31 A"/>
    <property type="chains" value="ZZ=1-124"/>
</dbReference>
<dbReference type="PDB" id="5LZT">
    <property type="method" value="EM"/>
    <property type="resolution" value="3.65 A"/>
    <property type="chains" value="ZZ=1-124"/>
</dbReference>
<dbReference type="PDB" id="5LZU">
    <property type="method" value="EM"/>
    <property type="resolution" value="3.75 A"/>
    <property type="chains" value="ZZ=1-124"/>
</dbReference>
<dbReference type="PDB" id="5LZV">
    <property type="method" value="EM"/>
    <property type="resolution" value="3.35 A"/>
    <property type="chains" value="ZZ=1-124"/>
</dbReference>
<dbReference type="PDB" id="5LZW">
    <property type="method" value="EM"/>
    <property type="resolution" value="3.53 A"/>
    <property type="chains" value="ZZ=1-124"/>
</dbReference>
<dbReference type="PDB" id="5LZX">
    <property type="method" value="EM"/>
    <property type="resolution" value="3.67 A"/>
    <property type="chains" value="ZZ=1-124"/>
</dbReference>
<dbReference type="PDB" id="5LZY">
    <property type="method" value="EM"/>
    <property type="resolution" value="3.99 A"/>
    <property type="chains" value="ZZ=1-124"/>
</dbReference>
<dbReference type="PDB" id="5LZZ">
    <property type="method" value="EM"/>
    <property type="resolution" value="3.47 A"/>
    <property type="chains" value="ZZ=1-124"/>
</dbReference>
<dbReference type="PDB" id="6D90">
    <property type="method" value="EM"/>
    <property type="resolution" value="3.20 A"/>
    <property type="chains" value="aa=1-124"/>
</dbReference>
<dbReference type="PDB" id="6D9J">
    <property type="method" value="EM"/>
    <property type="resolution" value="3.20 A"/>
    <property type="chains" value="aa=1-124"/>
</dbReference>
<dbReference type="PDB" id="6GZ3">
    <property type="method" value="EM"/>
    <property type="resolution" value="3.60 A"/>
    <property type="chains" value="BZ=27-112"/>
</dbReference>
<dbReference type="PDB" id="6HCF">
    <property type="method" value="EM"/>
    <property type="resolution" value="3.90 A"/>
    <property type="chains" value="a1=1-124"/>
</dbReference>
<dbReference type="PDB" id="6HCJ">
    <property type="method" value="EM"/>
    <property type="resolution" value="3.80 A"/>
    <property type="chains" value="a2=1-124"/>
</dbReference>
<dbReference type="PDB" id="6HCM">
    <property type="method" value="EM"/>
    <property type="resolution" value="6.80 A"/>
    <property type="chains" value="a1=1-124"/>
</dbReference>
<dbReference type="PDB" id="6HCQ">
    <property type="method" value="EM"/>
    <property type="resolution" value="6.50 A"/>
    <property type="chains" value="a2=1-124"/>
</dbReference>
<dbReference type="PDB" id="6MTB">
    <property type="method" value="EM"/>
    <property type="resolution" value="3.60 A"/>
    <property type="chains" value="ZZ=40-114"/>
</dbReference>
<dbReference type="PDB" id="6MTC">
    <property type="method" value="EM"/>
    <property type="resolution" value="3.40 A"/>
    <property type="chains" value="ZZ=40-114"/>
</dbReference>
<dbReference type="PDB" id="6MTD">
    <property type="method" value="EM"/>
    <property type="resolution" value="3.30 A"/>
    <property type="chains" value="ZZ=40-114"/>
</dbReference>
<dbReference type="PDB" id="6MTE">
    <property type="method" value="EM"/>
    <property type="resolution" value="3.40 A"/>
    <property type="chains" value="ZZ=40-114"/>
</dbReference>
<dbReference type="PDB" id="6P4G">
    <property type="method" value="EM"/>
    <property type="resolution" value="3.10 A"/>
    <property type="chains" value="a=1-124"/>
</dbReference>
<dbReference type="PDB" id="6P4H">
    <property type="method" value="EM"/>
    <property type="resolution" value="3.20 A"/>
    <property type="chains" value="a=1-124"/>
</dbReference>
<dbReference type="PDB" id="6P5I">
    <property type="method" value="EM"/>
    <property type="resolution" value="3.10 A"/>
    <property type="chains" value="a=1-124"/>
</dbReference>
<dbReference type="PDB" id="6P5J">
    <property type="method" value="EM"/>
    <property type="resolution" value="3.10 A"/>
    <property type="chains" value="a=1-124"/>
</dbReference>
<dbReference type="PDB" id="6P5K">
    <property type="method" value="EM"/>
    <property type="resolution" value="3.10 A"/>
    <property type="chains" value="a=1-124"/>
</dbReference>
<dbReference type="PDB" id="6P5N">
    <property type="method" value="EM"/>
    <property type="resolution" value="3.20 A"/>
    <property type="chains" value="a=1-124"/>
</dbReference>
<dbReference type="PDB" id="6R5Q">
    <property type="method" value="EM"/>
    <property type="resolution" value="3.00 A"/>
    <property type="chains" value="OO=40-114"/>
</dbReference>
<dbReference type="PDB" id="6R6G">
    <property type="method" value="EM"/>
    <property type="resolution" value="3.70 A"/>
    <property type="chains" value="OO=40-114"/>
</dbReference>
<dbReference type="PDB" id="6R6P">
    <property type="method" value="EM"/>
    <property type="resolution" value="3.10 A"/>
    <property type="chains" value="OO=40-114"/>
</dbReference>
<dbReference type="PDB" id="6R7Q">
    <property type="method" value="EM"/>
    <property type="resolution" value="3.90 A"/>
    <property type="chains" value="OO=40-114"/>
</dbReference>
<dbReference type="PDB" id="6SGC">
    <property type="method" value="EM"/>
    <property type="resolution" value="2.80 A"/>
    <property type="chains" value="a1=1-124"/>
</dbReference>
<dbReference type="PDB" id="6W2S">
    <property type="method" value="EM"/>
    <property type="resolution" value="3.00 A"/>
    <property type="chains" value="a=1-124"/>
</dbReference>
<dbReference type="PDB" id="6W2T">
    <property type="method" value="EM"/>
    <property type="resolution" value="3.36 A"/>
    <property type="chains" value="i=1-124"/>
</dbReference>
<dbReference type="PDB" id="6YAL">
    <property type="method" value="EM"/>
    <property type="resolution" value="3.00 A"/>
    <property type="chains" value="n=1-124"/>
</dbReference>
<dbReference type="PDB" id="6YAM">
    <property type="method" value="EM"/>
    <property type="resolution" value="3.60 A"/>
    <property type="chains" value="n=40-114"/>
</dbReference>
<dbReference type="PDB" id="6YAN">
    <property type="method" value="EM"/>
    <property type="resolution" value="3.48 A"/>
    <property type="chains" value="h=40-114"/>
</dbReference>
<dbReference type="PDB" id="6ZVK">
    <property type="method" value="EM"/>
    <property type="resolution" value="3.49 A"/>
    <property type="chains" value="M3=40-114"/>
</dbReference>
<dbReference type="PDB" id="7A01">
    <property type="method" value="EM"/>
    <property type="resolution" value="3.60 A"/>
    <property type="chains" value="M3=40-114"/>
</dbReference>
<dbReference type="PDB" id="7JQB">
    <property type="method" value="EM"/>
    <property type="resolution" value="2.70 A"/>
    <property type="chains" value="a=1-124"/>
</dbReference>
<dbReference type="PDB" id="7JQC">
    <property type="method" value="EM"/>
    <property type="resolution" value="3.30 A"/>
    <property type="chains" value="a=1-124"/>
</dbReference>
<dbReference type="PDB" id="7MDZ">
    <property type="method" value="EM"/>
    <property type="resolution" value="3.20 A"/>
    <property type="chains" value="ZZ=1-124"/>
</dbReference>
<dbReference type="PDB" id="7NWH">
    <property type="method" value="EM"/>
    <property type="resolution" value="4.10 A"/>
    <property type="chains" value="ZZ=3-124"/>
</dbReference>
<dbReference type="PDB" id="7NWI">
    <property type="method" value="EM"/>
    <property type="resolution" value="3.13 A"/>
    <property type="chains" value="ZZ=3-124"/>
</dbReference>
<dbReference type="PDB" id="7O7Y">
    <property type="method" value="EM"/>
    <property type="resolution" value="2.20 A"/>
    <property type="chains" value="Ay=1-124"/>
</dbReference>
<dbReference type="PDB" id="7O7Z">
    <property type="method" value="EM"/>
    <property type="resolution" value="2.40 A"/>
    <property type="chains" value="Ay=1-124"/>
</dbReference>
<dbReference type="PDB" id="7O80">
    <property type="method" value="EM"/>
    <property type="resolution" value="2.90 A"/>
    <property type="chains" value="Ay=1-124"/>
</dbReference>
<dbReference type="PDB" id="7O81">
    <property type="method" value="EM"/>
    <property type="resolution" value="3.10 A"/>
    <property type="chains" value="Ay=1-124"/>
</dbReference>
<dbReference type="PDB" id="7OYD">
    <property type="method" value="EM"/>
    <property type="resolution" value="2.30 A"/>
    <property type="chains" value="ZZ=1-124"/>
</dbReference>
<dbReference type="PDB" id="7SYG">
    <property type="method" value="EM"/>
    <property type="resolution" value="4.30 A"/>
    <property type="chains" value="a=1-124"/>
</dbReference>
<dbReference type="PDB" id="7SYH">
    <property type="method" value="EM"/>
    <property type="resolution" value="4.60 A"/>
    <property type="chains" value="a=1-124"/>
</dbReference>
<dbReference type="PDB" id="7SYI">
    <property type="method" value="EM"/>
    <property type="resolution" value="4.50 A"/>
    <property type="chains" value="a=1-124"/>
</dbReference>
<dbReference type="PDB" id="7SYJ">
    <property type="method" value="EM"/>
    <property type="resolution" value="4.80 A"/>
    <property type="chains" value="a=1-124"/>
</dbReference>
<dbReference type="PDB" id="7SYK">
    <property type="method" value="EM"/>
    <property type="resolution" value="4.20 A"/>
    <property type="chains" value="a=1-124"/>
</dbReference>
<dbReference type="PDB" id="7SYL">
    <property type="method" value="EM"/>
    <property type="resolution" value="4.50 A"/>
    <property type="chains" value="a=1-124"/>
</dbReference>
<dbReference type="PDB" id="7SYM">
    <property type="method" value="EM"/>
    <property type="resolution" value="4.80 A"/>
    <property type="chains" value="a=1-124"/>
</dbReference>
<dbReference type="PDB" id="7SYN">
    <property type="method" value="EM"/>
    <property type="resolution" value="4.00 A"/>
    <property type="chains" value="a=1-124"/>
</dbReference>
<dbReference type="PDB" id="7SYO">
    <property type="method" value="EM"/>
    <property type="resolution" value="4.60 A"/>
    <property type="chains" value="a=1-124"/>
</dbReference>
<dbReference type="PDB" id="7SYP">
    <property type="method" value="EM"/>
    <property type="resolution" value="4.00 A"/>
    <property type="chains" value="a=1-124"/>
</dbReference>
<dbReference type="PDB" id="7SYQ">
    <property type="method" value="EM"/>
    <property type="resolution" value="3.80 A"/>
    <property type="chains" value="a=1-124"/>
</dbReference>
<dbReference type="PDB" id="7SYR">
    <property type="method" value="EM"/>
    <property type="resolution" value="3.60 A"/>
    <property type="chains" value="a=1-124"/>
</dbReference>
<dbReference type="PDB" id="7SYS">
    <property type="method" value="EM"/>
    <property type="resolution" value="3.50 A"/>
    <property type="chains" value="a=1-124"/>
</dbReference>
<dbReference type="PDB" id="7SYT">
    <property type="method" value="EM"/>
    <property type="resolution" value="4.40 A"/>
    <property type="chains" value="a=1-124"/>
</dbReference>
<dbReference type="PDB" id="7SYU">
    <property type="method" value="EM"/>
    <property type="resolution" value="4.60 A"/>
    <property type="chains" value="a=1-124"/>
</dbReference>
<dbReference type="PDB" id="7SYV">
    <property type="method" value="EM"/>
    <property type="resolution" value="3.90 A"/>
    <property type="chains" value="a=1-124"/>
</dbReference>
<dbReference type="PDB" id="7SYW">
    <property type="method" value="EM"/>
    <property type="resolution" value="3.70 A"/>
    <property type="chains" value="a=1-124"/>
</dbReference>
<dbReference type="PDB" id="7SYX">
    <property type="method" value="EM"/>
    <property type="resolution" value="3.70 A"/>
    <property type="chains" value="a=1-124"/>
</dbReference>
<dbReference type="PDB" id="7TOQ">
    <property type="method" value="EM"/>
    <property type="resolution" value="3.10 A"/>
    <property type="chains" value="AS25=40-114"/>
</dbReference>
<dbReference type="PDB" id="7TOR">
    <property type="method" value="EM"/>
    <property type="resolution" value="2.90 A"/>
    <property type="chains" value="AS25=40-114"/>
</dbReference>
<dbReference type="PDB" id="7UCJ">
    <property type="method" value="EM"/>
    <property type="resolution" value="3.10 A"/>
    <property type="chains" value="ZZ=40-114"/>
</dbReference>
<dbReference type="PDB" id="7UCK">
    <property type="method" value="EM"/>
    <property type="resolution" value="2.80 A"/>
    <property type="chains" value="ZZ=40-114"/>
</dbReference>
<dbReference type="PDB" id="8BHF">
    <property type="method" value="EM"/>
    <property type="resolution" value="3.10 A"/>
    <property type="chains" value="a3=40-114"/>
</dbReference>
<dbReference type="PDB" id="8BTK">
    <property type="method" value="EM"/>
    <property type="resolution" value="3.50 A"/>
    <property type="chains" value="Ay=1-124"/>
</dbReference>
<dbReference type="PDB" id="8P03">
    <property type="method" value="EM"/>
    <property type="resolution" value="3.04 A"/>
    <property type="chains" value="n=1-124"/>
</dbReference>
<dbReference type="PDB" id="8P09">
    <property type="method" value="EM"/>
    <property type="resolution" value="3.30 A"/>
    <property type="chains" value="n=1-124"/>
</dbReference>
<dbReference type="PDB" id="8P2K">
    <property type="method" value="EM"/>
    <property type="resolution" value="2.90 A"/>
    <property type="chains" value="Ay=1-124"/>
</dbReference>
<dbReference type="PDB" id="8SCB">
    <property type="method" value="EM"/>
    <property type="resolution" value="2.50 A"/>
    <property type="chains" value="ZZ=1-124"/>
</dbReference>
<dbReference type="PDB" id="8VFT">
    <property type="method" value="EM"/>
    <property type="resolution" value="3.30 A"/>
    <property type="chains" value="ZZ=1-124"/>
</dbReference>
<dbReference type="PDB" id="9BDL">
    <property type="method" value="EM"/>
    <property type="resolution" value="2.80 A"/>
    <property type="chains" value="AS25=40-114"/>
</dbReference>
<dbReference type="PDB" id="9BDN">
    <property type="method" value="EM"/>
    <property type="resolution" value="3.10 A"/>
    <property type="chains" value="AS25=40-114"/>
</dbReference>
<dbReference type="PDB" id="9C8K">
    <property type="method" value="EM"/>
    <property type="resolution" value="3.10 A"/>
    <property type="chains" value="Z=1-124"/>
</dbReference>
<dbReference type="PDB" id="9F1B">
    <property type="method" value="EM"/>
    <property type="resolution" value="3.01 A"/>
    <property type="chains" value="Ay=1-124"/>
</dbReference>
<dbReference type="PDB" id="9F1C">
    <property type="method" value="EM"/>
    <property type="resolution" value="3.78 A"/>
    <property type="chains" value="Ay=1-124"/>
</dbReference>
<dbReference type="PDB" id="9F1D">
    <property type="method" value="EM"/>
    <property type="resolution" value="3.26 A"/>
    <property type="chains" value="Ay=1-124"/>
</dbReference>
<dbReference type="PDBsum" id="3JAG"/>
<dbReference type="PDBsum" id="3JAH"/>
<dbReference type="PDBsum" id="3JAI"/>
<dbReference type="PDBsum" id="4D5L"/>
<dbReference type="PDBsum" id="4D61"/>
<dbReference type="PDBsum" id="4KZX"/>
<dbReference type="PDBsum" id="4KZY"/>
<dbReference type="PDBsum" id="4KZZ"/>
<dbReference type="PDBsum" id="5K0Y"/>
<dbReference type="PDBsum" id="5LZS"/>
<dbReference type="PDBsum" id="5LZT"/>
<dbReference type="PDBsum" id="5LZU"/>
<dbReference type="PDBsum" id="5LZV"/>
<dbReference type="PDBsum" id="5LZW"/>
<dbReference type="PDBsum" id="5LZX"/>
<dbReference type="PDBsum" id="5LZY"/>
<dbReference type="PDBsum" id="5LZZ"/>
<dbReference type="PDBsum" id="6D90"/>
<dbReference type="PDBsum" id="6D9J"/>
<dbReference type="PDBsum" id="6GZ3"/>
<dbReference type="PDBsum" id="6HCF"/>
<dbReference type="PDBsum" id="6HCJ"/>
<dbReference type="PDBsum" id="6HCM"/>
<dbReference type="PDBsum" id="6HCQ"/>
<dbReference type="PDBsum" id="6MTB"/>
<dbReference type="PDBsum" id="6MTC"/>
<dbReference type="PDBsum" id="6MTD"/>
<dbReference type="PDBsum" id="6MTE"/>
<dbReference type="PDBsum" id="6P4G"/>
<dbReference type="PDBsum" id="6P4H"/>
<dbReference type="PDBsum" id="6P5I"/>
<dbReference type="PDBsum" id="6P5J"/>
<dbReference type="PDBsum" id="6P5K"/>
<dbReference type="PDBsum" id="6P5N"/>
<dbReference type="PDBsum" id="6R5Q"/>
<dbReference type="PDBsum" id="6R6G"/>
<dbReference type="PDBsum" id="6R6P"/>
<dbReference type="PDBsum" id="6R7Q"/>
<dbReference type="PDBsum" id="6SGC"/>
<dbReference type="PDBsum" id="6W2S"/>
<dbReference type="PDBsum" id="6W2T"/>
<dbReference type="PDBsum" id="6YAL"/>
<dbReference type="PDBsum" id="6YAM"/>
<dbReference type="PDBsum" id="6YAN"/>
<dbReference type="PDBsum" id="6ZVK"/>
<dbReference type="PDBsum" id="7A01"/>
<dbReference type="PDBsum" id="7JQB"/>
<dbReference type="PDBsum" id="7JQC"/>
<dbReference type="PDBsum" id="7MDZ"/>
<dbReference type="PDBsum" id="7NWH"/>
<dbReference type="PDBsum" id="7NWI"/>
<dbReference type="PDBsum" id="7O7Y"/>
<dbReference type="PDBsum" id="7O7Z"/>
<dbReference type="PDBsum" id="7O80"/>
<dbReference type="PDBsum" id="7O81"/>
<dbReference type="PDBsum" id="7OYD"/>
<dbReference type="PDBsum" id="7SYG"/>
<dbReference type="PDBsum" id="7SYH"/>
<dbReference type="PDBsum" id="7SYI"/>
<dbReference type="PDBsum" id="7SYJ"/>
<dbReference type="PDBsum" id="7SYK"/>
<dbReference type="PDBsum" id="7SYL"/>
<dbReference type="PDBsum" id="7SYM"/>
<dbReference type="PDBsum" id="7SYN"/>
<dbReference type="PDBsum" id="7SYO"/>
<dbReference type="PDBsum" id="7SYP"/>
<dbReference type="PDBsum" id="7SYQ"/>
<dbReference type="PDBsum" id="7SYR"/>
<dbReference type="PDBsum" id="7SYS"/>
<dbReference type="PDBsum" id="7SYT"/>
<dbReference type="PDBsum" id="7SYU"/>
<dbReference type="PDBsum" id="7SYV"/>
<dbReference type="PDBsum" id="7SYW"/>
<dbReference type="PDBsum" id="7SYX"/>
<dbReference type="PDBsum" id="7TOQ"/>
<dbReference type="PDBsum" id="7TOR"/>
<dbReference type="PDBsum" id="7UCJ"/>
<dbReference type="PDBsum" id="7UCK"/>
<dbReference type="PDBsum" id="8BHF"/>
<dbReference type="PDBsum" id="8BTK"/>
<dbReference type="PDBsum" id="8P03"/>
<dbReference type="PDBsum" id="8P09"/>
<dbReference type="PDBsum" id="8P2K"/>
<dbReference type="PDBsum" id="8SCB"/>
<dbReference type="PDBsum" id="8VFT"/>
<dbReference type="PDBsum" id="9BDL"/>
<dbReference type="PDBsum" id="9BDN"/>
<dbReference type="PDBsum" id="9C8K"/>
<dbReference type="PDBsum" id="9F1B"/>
<dbReference type="PDBsum" id="9F1C"/>
<dbReference type="PDBsum" id="9F1D"/>
<dbReference type="EMDB" id="EMD-0098"/>
<dbReference type="EMDB" id="EMD-0099"/>
<dbReference type="EMDB" id="EMD-0100"/>
<dbReference type="EMDB" id="EMD-0192"/>
<dbReference type="EMDB" id="EMD-0194"/>
<dbReference type="EMDB" id="EMD-0195"/>
<dbReference type="EMDB" id="EMD-0197"/>
<dbReference type="EMDB" id="EMD-10181"/>
<dbReference type="EMDB" id="EMD-10760"/>
<dbReference type="EMDB" id="EMD-10761"/>
<dbReference type="EMDB" id="EMD-10762"/>
<dbReference type="EMDB" id="EMD-11459"/>
<dbReference type="EMDB" id="EMD-11590"/>
<dbReference type="EMDB" id="EMD-12632"/>
<dbReference type="EMDB" id="EMD-12633"/>
<dbReference type="EMDB" id="EMD-12756"/>
<dbReference type="EMDB" id="EMD-12757"/>
<dbReference type="EMDB" id="EMD-12758"/>
<dbReference type="EMDB" id="EMD-12759"/>
<dbReference type="EMDB" id="EMD-13114"/>
<dbReference type="EMDB" id="EMD-16052"/>
<dbReference type="EMDB" id="EMD-16232"/>
<dbReference type="EMDB" id="EMD-17329"/>
<dbReference type="EMDB" id="EMD-17330"/>
<dbReference type="EMDB" id="EMD-17367"/>
<dbReference type="EMDB" id="EMD-20248"/>
<dbReference type="EMDB" id="EMD-20249"/>
<dbReference type="EMDB" id="EMD-20255"/>
<dbReference type="EMDB" id="EMD-20256"/>
<dbReference type="EMDB" id="EMD-20257"/>
<dbReference type="EMDB" id="EMD-20258"/>
<dbReference type="EMDB" id="EMD-21529"/>
<dbReference type="EMDB" id="EMD-21530"/>
<dbReference type="EMDB" id="EMD-22432"/>
<dbReference type="EMDB" id="EMD-22433"/>
<dbReference type="EMDB" id="EMD-23785"/>
<dbReference type="EMDB" id="EMD-25527"/>
<dbReference type="EMDB" id="EMD-25528"/>
<dbReference type="EMDB" id="EMD-25529"/>
<dbReference type="EMDB" id="EMD-25530"/>
<dbReference type="EMDB" id="EMD-25531"/>
<dbReference type="EMDB" id="EMD-25532"/>
<dbReference type="EMDB" id="EMD-25533"/>
<dbReference type="EMDB" id="EMD-25534"/>
<dbReference type="EMDB" id="EMD-25535"/>
<dbReference type="EMDB" id="EMD-25536"/>
<dbReference type="EMDB" id="EMD-25537"/>
<dbReference type="EMDB" id="EMD-25538"/>
<dbReference type="EMDB" id="EMD-25539"/>
<dbReference type="EMDB" id="EMD-25540"/>
<dbReference type="EMDB" id="EMD-25541"/>
<dbReference type="EMDB" id="EMD-25542"/>
<dbReference type="EMDB" id="EMD-25543"/>
<dbReference type="EMDB" id="EMD-25544"/>
<dbReference type="EMDB" id="EMD-26035"/>
<dbReference type="EMDB" id="EMD-26036"/>
<dbReference type="EMDB" id="EMD-26444"/>
<dbReference type="EMDB" id="EMD-26445"/>
<dbReference type="EMDB" id="EMD-40344"/>
<dbReference type="EMDB" id="EMD-4130"/>
<dbReference type="EMDB" id="EMD-4131"/>
<dbReference type="EMDB" id="EMD-4132"/>
<dbReference type="EMDB" id="EMD-4133"/>
<dbReference type="EMDB" id="EMD-4134"/>
<dbReference type="EMDB" id="EMD-4135"/>
<dbReference type="EMDB" id="EMD-4136"/>
<dbReference type="EMDB" id="EMD-4137"/>
<dbReference type="EMDB" id="EMD-43189"/>
<dbReference type="EMDB" id="EMD-44461"/>
<dbReference type="EMDB" id="EMD-44463"/>
<dbReference type="EMDB" id="EMD-45307"/>
<dbReference type="EMDB" id="EMD-4729"/>
<dbReference type="EMDB" id="EMD-4735"/>
<dbReference type="EMDB" id="EMD-4737"/>
<dbReference type="EMDB" id="EMD-4745"/>
<dbReference type="EMDB" id="EMD-50124"/>
<dbReference type="EMDB" id="EMD-50125"/>
<dbReference type="EMDB" id="EMD-50126"/>
<dbReference type="EMDB" id="EMD-7834"/>
<dbReference type="EMDB" id="EMD-7836"/>
<dbReference type="EMDB" id="EMD-8190"/>
<dbReference type="EMDB" id="EMD-9237"/>
<dbReference type="EMDB" id="EMD-9239"/>
<dbReference type="EMDB" id="EMD-9240"/>
<dbReference type="EMDB" id="EMD-9242"/>
<dbReference type="SMR" id="G1TDB3"/>
<dbReference type="FunCoup" id="G1TDB3">
    <property type="interactions" value="1559"/>
</dbReference>
<dbReference type="IntAct" id="G1TDB3">
    <property type="interactions" value="1"/>
</dbReference>
<dbReference type="STRING" id="9986.ENSOCUP00000014824"/>
<dbReference type="PaxDb" id="9986-ENSOCUP00000014824"/>
<dbReference type="Ensembl" id="ENSOCUT00000017253.3">
    <property type="protein sequence ID" value="ENSOCUP00000014824.3"/>
    <property type="gene ID" value="ENSOCUG00000017256.3"/>
</dbReference>
<dbReference type="eggNOG" id="KOG1767">
    <property type="taxonomic scope" value="Eukaryota"/>
</dbReference>
<dbReference type="GeneTree" id="ENSGT00390000004856"/>
<dbReference type="HOGENOM" id="CLU_129470_0_1_1"/>
<dbReference type="InParanoid" id="G1TDB3"/>
<dbReference type="OMA" id="RIVHHSG"/>
<dbReference type="TreeFam" id="TF314909"/>
<dbReference type="EvolutionaryTrace" id="G1TDB3"/>
<dbReference type="Proteomes" id="UP000001811">
    <property type="component" value="Unplaced"/>
</dbReference>
<dbReference type="Bgee" id="ENSOCUG00000017256">
    <property type="expression patterns" value="Expressed in uterus and 15 other cell types or tissues"/>
</dbReference>
<dbReference type="GO" id="GO:0022626">
    <property type="term" value="C:cytosolic ribosome"/>
    <property type="evidence" value="ECO:0000314"/>
    <property type="project" value="UniProtKB"/>
</dbReference>
<dbReference type="GO" id="GO:0022627">
    <property type="term" value="C:cytosolic small ribosomal subunit"/>
    <property type="evidence" value="ECO:0007669"/>
    <property type="project" value="Ensembl"/>
</dbReference>
<dbReference type="GO" id="GO:0005730">
    <property type="term" value="C:nucleolus"/>
    <property type="evidence" value="ECO:0007669"/>
    <property type="project" value="Ensembl"/>
</dbReference>
<dbReference type="GO" id="GO:0014069">
    <property type="term" value="C:postsynaptic density"/>
    <property type="evidence" value="ECO:0007669"/>
    <property type="project" value="Ensembl"/>
</dbReference>
<dbReference type="GO" id="GO:0003735">
    <property type="term" value="F:structural constituent of ribosome"/>
    <property type="evidence" value="ECO:0000314"/>
    <property type="project" value="UniProtKB"/>
</dbReference>
<dbReference type="GO" id="GO:0042274">
    <property type="term" value="P:ribosomal small subunit biogenesis"/>
    <property type="evidence" value="ECO:0007669"/>
    <property type="project" value="Ensembl"/>
</dbReference>
<dbReference type="GO" id="GO:0006364">
    <property type="term" value="P:rRNA processing"/>
    <property type="evidence" value="ECO:0007669"/>
    <property type="project" value="Ensembl"/>
</dbReference>
<dbReference type="DisProt" id="DP00882"/>
<dbReference type="FunFam" id="1.10.10.10:FF:000166">
    <property type="entry name" value="40S ribosomal protein S25"/>
    <property type="match status" value="1"/>
</dbReference>
<dbReference type="Gene3D" id="1.10.10.10">
    <property type="entry name" value="Winged helix-like DNA-binding domain superfamily/Winged helix DNA-binding domain"/>
    <property type="match status" value="1"/>
</dbReference>
<dbReference type="InterPro" id="IPR004977">
    <property type="entry name" value="Ribosomal_eS25"/>
</dbReference>
<dbReference type="InterPro" id="IPR036388">
    <property type="entry name" value="WH-like_DNA-bd_sf"/>
</dbReference>
<dbReference type="PANTHER" id="PTHR12850">
    <property type="entry name" value="40S RIBOSOMAL PROTEIN S25"/>
    <property type="match status" value="1"/>
</dbReference>
<dbReference type="Pfam" id="PF03297">
    <property type="entry name" value="Ribosomal_S25"/>
    <property type="match status" value="1"/>
</dbReference>
<reference key="1">
    <citation type="journal article" date="2011" name="Nature">
        <title>A high-resolution map of human evolutionary constraint using 29 mammals.</title>
        <authorList>
            <person name="Lindblad-Toh K."/>
            <person name="Garber M."/>
            <person name="Zuk O."/>
            <person name="Lin M.F."/>
            <person name="Parker B.J."/>
            <person name="Washietl S."/>
            <person name="Kheradpour P."/>
            <person name="Ernst J."/>
            <person name="Jordan G."/>
            <person name="Mauceli E."/>
            <person name="Ward L.D."/>
            <person name="Lowe C.B."/>
            <person name="Holloway A.K."/>
            <person name="Clamp M."/>
            <person name="Gnerre S."/>
            <person name="Alfoldi J."/>
            <person name="Beal K."/>
            <person name="Chang J."/>
            <person name="Clawson H."/>
            <person name="Cuff J."/>
            <person name="Di Palma F."/>
            <person name="Fitzgerald S."/>
            <person name="Flicek P."/>
            <person name="Guttman M."/>
            <person name="Hubisz M.J."/>
            <person name="Jaffe D.B."/>
            <person name="Jungreis I."/>
            <person name="Kent W.J."/>
            <person name="Kostka D."/>
            <person name="Lara M."/>
            <person name="Martins A.L."/>
            <person name="Massingham T."/>
            <person name="Moltke I."/>
            <person name="Raney B.J."/>
            <person name="Rasmussen M.D."/>
            <person name="Robinson J."/>
            <person name="Stark A."/>
            <person name="Vilella A.J."/>
            <person name="Wen J."/>
            <person name="Xie X."/>
            <person name="Zody M.C."/>
            <person name="Baldwin J."/>
            <person name="Bloom T."/>
            <person name="Chin C.W."/>
            <person name="Heiman D."/>
            <person name="Nicol R."/>
            <person name="Nusbaum C."/>
            <person name="Young S."/>
            <person name="Wilkinson J."/>
            <person name="Worley K.C."/>
            <person name="Kovar C.L."/>
            <person name="Muzny D.M."/>
            <person name="Gibbs R.A."/>
            <person name="Cree A."/>
            <person name="Dihn H.H."/>
            <person name="Fowler G."/>
            <person name="Jhangiani S."/>
            <person name="Joshi V."/>
            <person name="Lee S."/>
            <person name="Lewis L.R."/>
            <person name="Nazareth L.V."/>
            <person name="Okwuonu G."/>
            <person name="Santibanez J."/>
            <person name="Warren W.C."/>
            <person name="Mardis E.R."/>
            <person name="Weinstock G.M."/>
            <person name="Wilson R.K."/>
            <person name="Delehaunty K."/>
            <person name="Dooling D."/>
            <person name="Fronik C."/>
            <person name="Fulton L."/>
            <person name="Fulton B."/>
            <person name="Graves T."/>
            <person name="Minx P."/>
            <person name="Sodergren E."/>
            <person name="Birney E."/>
            <person name="Margulies E.H."/>
            <person name="Herrero J."/>
            <person name="Green E.D."/>
            <person name="Haussler D."/>
            <person name="Siepel A."/>
            <person name="Goldman N."/>
            <person name="Pollard K.S."/>
            <person name="Pedersen J.S."/>
            <person name="Lander E.S."/>
            <person name="Kellis M."/>
        </authorList>
    </citation>
    <scope>NUCLEOTIDE SEQUENCE [LARGE SCALE GENOMIC DNA]</scope>
    <source>
        <strain>Thorbecke</strain>
    </source>
</reference>
<reference evidence="25 26" key="2">
    <citation type="journal article" date="2013" name="Nature">
        <title>The initiation of mammalian protein synthesis and mRNA scanning mechanism.</title>
        <authorList>
            <person name="Lomakin I.B."/>
            <person name="Steitz T.A."/>
        </authorList>
    </citation>
    <scope>X-RAY CRYSTALLOGRAPHY (7.01 ANGSTROMS) OF 40S RIBOSOME</scope>
    <scope>FUNCTION</scope>
    <scope>SUBUNIT</scope>
    <scope>SUBCELLULAR LOCATION</scope>
</reference>
<reference evidence="23 24" key="3">
    <citation type="journal article" date="2015" name="Mol. Cell">
        <title>Cryo-EM of ribosomal 80S complexes with termination factors reveals the translocated cricket paralysis virus IRES.</title>
        <authorList>
            <person name="Muhs M."/>
            <person name="Hilal T."/>
            <person name="Mielke T."/>
            <person name="Skabkin M.A."/>
            <person name="Sanbonmatsu K.Y."/>
            <person name="Pestova T.V."/>
            <person name="Spahn C.M."/>
        </authorList>
    </citation>
    <scope>STRUCTURE BY ELECTRON MICROSCOPY (9.00 ANGSTROMS) OF RIBOSOME</scope>
    <scope>FUNCTION</scope>
    <scope>SUBUNIT</scope>
    <scope>SUBCELLULAR LOCATION</scope>
</reference>
<reference evidence="21 22" key="4">
    <citation type="journal article" date="2015" name="Nature">
        <title>Structural basis for stop codon recognition in eukaryotes.</title>
        <authorList>
            <person name="Brown A."/>
            <person name="Shao S."/>
            <person name="Murray J."/>
            <person name="Hegde R.S."/>
            <person name="Ramakrishnan V."/>
        </authorList>
    </citation>
    <scope>STRUCTURE BY ELECTRON MICROSCOPY (3.45 ANGSTROMS) OF 41-115 OF RIBOSOME</scope>
    <scope>FUNCTION</scope>
    <scope>SUBCELLULAR LOCATION</scope>
    <scope>SUBUNIT</scope>
</reference>
<reference evidence="27 28" key="5">
    <citation type="journal article" date="2016" name="Cell">
        <title>Decoding mammalian ribosome-mRNA states by translational GTPase complexes.</title>
        <authorList>
            <person name="Shao S."/>
            <person name="Murray J."/>
            <person name="Brown A."/>
            <person name="Taunton J."/>
            <person name="Ramakrishnan V."/>
            <person name="Hegde R.S."/>
        </authorList>
    </citation>
    <scope>STRUCTURE BY ELECTRON MICROSCOPY (3.31 ANGSTROMS) OF RIBOSOME</scope>
    <scope>FUNCTION</scope>
    <scope>SUBCELLULAR LOCATION</scope>
    <scope>SUBUNIT</scope>
</reference>
<reference evidence="31" key="6">
    <citation type="journal article" date="2018" name="Cell Rep.">
        <title>tRNA translocation by the eukaryotic 80S ribosome and the impact of GTP hydrolysis.</title>
        <authorList>
            <person name="Flis J."/>
            <person name="Holm M."/>
            <person name="Rundlet E.J."/>
            <person name="Loerke J."/>
            <person name="Hilal T."/>
            <person name="Dabrowski M."/>
            <person name="Burger J."/>
            <person name="Mielke T."/>
            <person name="Blanchard S.C."/>
            <person name="Spahn C.M.T."/>
            <person name="Budkevich T.V."/>
        </authorList>
    </citation>
    <scope>STRUCTURE BY ELECTRON MICROSCOPY (3.60 ANGSTROMS) OF 28-113 OF RIBOSOME</scope>
    <scope>FUNCTION</scope>
    <scope>SUBCELLULAR LOCATION</scope>
    <scope>SUBUNIT</scope>
</reference>
<reference evidence="29 30" key="7">
    <citation type="journal article" date="2018" name="Elife">
        <title>Dual tRNA mimicry in the Cricket paralysis virus IRES uncovers an unexpected similarity with the Hepatitis C Virus IRES.</title>
        <authorList>
            <person name="Pisareva V.P."/>
            <person name="Pisarev A.V."/>
            <person name="Fernandez I.S."/>
        </authorList>
    </citation>
    <scope>STRUCTURE BY ELECTRON MICROSCOPY (3.20 ANGSTROMS) OF RIBOSOME</scope>
    <scope>SUBCELLULAR LOCATION</scope>
    <scope>SUBUNIT</scope>
</reference>
<reference evidence="34 35" key="8">
    <citation type="journal article" date="2018" name="Elife">
        <title>Structures of translationally inactive mammalian ribosomes.</title>
        <authorList>
            <person name="Brown A."/>
            <person name="Baird M.R."/>
            <person name="Yip M.C."/>
            <person name="Murray J."/>
            <person name="Shao S."/>
        </authorList>
    </citation>
    <scope>STRUCTURE BY ELECTRON MICROSCOPY (3.30 ANGSTROMS) OF 41-115 OF RIBOSOME</scope>
    <scope>SUBCELLULAR LOCATION</scope>
    <scope>SUBUNIT</scope>
</reference>
<reference evidence="32 33" key="9">
    <citation type="journal article" date="2018" name="Mol. Cell">
        <title>ZNF598 is a quality control sensor of collided ribosomes.</title>
        <authorList>
            <person name="Juszkiewicz S."/>
            <person name="Chandrasekaran V."/>
            <person name="Lin Z."/>
            <person name="Kraatz S."/>
            <person name="Ramakrishnan V."/>
            <person name="Hegde R.S."/>
        </authorList>
    </citation>
    <scope>STRUCTURE BY ELECTRON MICROSCOPY (3.80 ANGSTROMS) OF RIBOSOME</scope>
    <scope>SUBCELLULAR LOCATION</scope>
    <scope>SUBUNIT</scope>
</reference>
<reference evidence="38 39" key="10">
    <citation type="journal article" date="2019" name="Elife">
        <title>Structural and mutational analysis of the ribosome-arresting human XBP1u.</title>
        <authorList>
            <person name="Shanmuganathan V."/>
            <person name="Schiller N."/>
            <person name="Magoulopoulou A."/>
            <person name="Cheng J."/>
            <person name="Braunger K."/>
            <person name="Cymer F."/>
            <person name="Berninghausen O."/>
            <person name="Beatrix B."/>
            <person name="Kohno K."/>
            <person name="von Heijne G."/>
            <person name="Beckmann R."/>
        </authorList>
    </citation>
    <scope>STRUCTURE BY ELECTRON MICROSCOPY (3.00 ANGSTROMS) OF 41-115 OF RIBOSOME</scope>
    <scope>SUBCELLULAR LOCATION</scope>
    <scope>SUBUNIT</scope>
</reference>
<reference evidence="36 37" key="11">
    <citation type="journal article" date="2019" name="EMBO J.">
        <title>The Israeli acute paralysis virus IRES captures host ribosomes by mimicking a ribosomal state with hybrid tRNAs.</title>
        <authorList>
            <person name="Acosta-Reyes F."/>
            <person name="Neupane R."/>
            <person name="Frank J."/>
            <person name="Fernandez I.S."/>
        </authorList>
    </citation>
    <scope>STRUCTURE BY ELECTRON MICROSCOPY (3.10 ANGSTROMS) OF RIBOSOME</scope>
    <scope>SUBCELLULAR LOCATION</scope>
    <scope>SUBUNIT</scope>
</reference>
<reference evidence="40" key="12">
    <citation type="journal article" date="2019" name="Nat. Struct. Mol. Biol.">
        <title>Mechanism of ribosome stalling during translation of a poly(A) tail.</title>
        <authorList>
            <person name="Chandrasekaran V."/>
            <person name="Juszkiewicz S."/>
            <person name="Choi J."/>
            <person name="Puglisi J.D."/>
            <person name="Brown A."/>
            <person name="Shao S."/>
            <person name="Ramakrishnan V."/>
            <person name="Hegde R.S."/>
        </authorList>
    </citation>
    <scope>STRUCTURE BY ELECTRON MICROSCOPY (2.80 ANGSTROMS) OF RIBOSOME</scope>
    <scope>SUBCELLULAR LOCATION</scope>
    <scope>SUBUNIT</scope>
</reference>
<reference evidence="43 44" key="13">
    <citation type="journal article" date="2020" name="Cell Rep.">
        <title>The Halastavi arva virus intergenic region IRES promotes translation by the simplest possible initiation mechanism.</title>
        <authorList>
            <person name="Abaeva I.S."/>
            <person name="Vicens Q."/>
            <person name="Bochler A."/>
            <person name="Soufari H."/>
            <person name="Simonetti A."/>
            <person name="Pestova T.V."/>
            <person name="Hashem Y."/>
            <person name="Hellen C.U.T."/>
        </authorList>
    </citation>
    <scope>STRUCTURE BY ELECTRON MICROSCOPY (3.49 ANGSTROMS) OF 40-114 OF RIBOSOME</scope>
    <scope>SUBCELLULAR LOCATION</scope>
    <scope>SUBUNIT</scope>
</reference>
<reference evidence="41 42" key="14">
    <citation type="journal article" date="2020" name="Elife">
        <title>A complex IRES at the 5'-UTR of a viral mRNA assembles a functional 48S complex via an uAUG intermediate.</title>
        <authorList>
            <person name="Neupane R."/>
            <person name="Pisareva V.P."/>
            <person name="Rodriguez C.F."/>
            <person name="Pisarev A.V."/>
            <person name="Fernandez I.S."/>
        </authorList>
    </citation>
    <scope>STRUCTURE BY ELECTRON MICROSCOPY (3.00 ANGSTROMS) OF RIBOSOME</scope>
    <scope>SUBCELLULAR LOCATION</scope>
    <scope>SUBUNIT</scope>
</reference>
<reference evidence="46 47" key="15">
    <citation type="journal article" date="2022" name="EMBO J.">
        <title>Molecular architecture of 40S translation initiation complexes on the hepatitis C virus IRES.</title>
        <authorList>
            <person name="Brown Z.P."/>
            <person name="Abaeva I.S."/>
            <person name="De S."/>
            <person name="Hellen C.U.T."/>
            <person name="Pestova T.V."/>
            <person name="Frank J."/>
        </authorList>
    </citation>
    <scope>STRUCTURE BY ELECTRON MICROSCOPY (3.50 ANGSTROMS) OF RIBOSOME</scope>
    <scope>SUBCELLULAR LOCATION</scope>
    <scope>SUBUNIT</scope>
</reference>
<reference evidence="48 49" key="16">
    <citation type="journal article" date="2022" name="Mol. Cell">
        <title>Direct epitranscriptomic regulation of mammalian translation initiation through N4-acetylcytidine.</title>
        <authorList>
            <person name="Arango D."/>
            <person name="Sturgill D."/>
            <person name="Yang R."/>
            <person name="Kanai T."/>
            <person name="Bauer P."/>
            <person name="Roy J."/>
            <person name="Wang Z."/>
            <person name="Hosogane M."/>
            <person name="Schiffers S."/>
            <person name="Oberdoerffer S."/>
        </authorList>
    </citation>
    <scope>STRUCTURE BY ELECTRON MICROSCOPY (2.80 ANGSTROMS) OF 40-114 OF RIBOSOME</scope>
    <scope>SUBCELLULAR LOCATION</scope>
    <scope>SUBUNIT</scope>
</reference>
<reference evidence="45" key="17">
    <citation type="journal article" date="2023" name="Nature">
        <title>A molecular network of conserved factors keeps ribosomes dormant in the egg.</title>
        <authorList>
            <person name="Leesch F."/>
            <person name="Lorenzo-Orts L."/>
            <person name="Pribitzer C."/>
            <person name="Grishkovskaya I."/>
            <person name="Roehsner J."/>
            <person name="Chugunova A."/>
            <person name="Matzinger M."/>
            <person name="Roitinger E."/>
            <person name="Belacic K."/>
            <person name="Kandolf S."/>
            <person name="Lin T.Y."/>
            <person name="Mechtler K."/>
            <person name="Meinhart A."/>
            <person name="Haselbach D."/>
            <person name="Pauli A."/>
        </authorList>
    </citation>
    <scope>STRUCTURE BY ELECTRON MICROSCOPY (2.30 ANGSTROMS) OF RIBOSOME</scope>
    <scope>SUBCELLULAR LOCATION</scope>
    <scope>SUBUNIT</scope>
</reference>
<organism>
    <name type="scientific">Oryctolagus cuniculus</name>
    <name type="common">Rabbit</name>
    <dbReference type="NCBI Taxonomy" id="9986"/>
    <lineage>
        <taxon>Eukaryota</taxon>
        <taxon>Metazoa</taxon>
        <taxon>Chordata</taxon>
        <taxon>Craniata</taxon>
        <taxon>Vertebrata</taxon>
        <taxon>Euteleostomi</taxon>
        <taxon>Mammalia</taxon>
        <taxon>Eutheria</taxon>
        <taxon>Euarchontoglires</taxon>
        <taxon>Glires</taxon>
        <taxon>Lagomorpha</taxon>
        <taxon>Leporidae</taxon>
        <taxon>Oryctolagus</taxon>
    </lineage>
</organism>
<protein>
    <recommendedName>
        <fullName>Small ribosomal subunit protein eS25</fullName>
    </recommendedName>
    <alternativeName>
        <fullName>40S ribosomal protein S25</fullName>
    </alternativeName>
</protein>
<sequence>PPKDDKKKKDAGKSAKKDKDPVNKSGGKAKKKKWSKGKVRDKLNNLVLFDKATYDKLCKEVPNYKLITPAVVSERLKIRGSLARAALQELLSKGLIKLVSKHRAQVIYTRNTKGGDAPAAGEDA</sequence>
<evidence type="ECO:0000250" key="1">
    <source>
        <dbReference type="UniProtKB" id="P62851"/>
    </source>
</evidence>
<evidence type="ECO:0000250" key="2">
    <source>
        <dbReference type="UniProtKB" id="P62852"/>
    </source>
</evidence>
<evidence type="ECO:0000256" key="3">
    <source>
        <dbReference type="SAM" id="MobiDB-lite"/>
    </source>
</evidence>
<evidence type="ECO:0000269" key="4">
    <source>
    </source>
</evidence>
<evidence type="ECO:0000269" key="5">
    <source>
    </source>
</evidence>
<evidence type="ECO:0000269" key="6">
    <source>
    </source>
</evidence>
<evidence type="ECO:0000269" key="7">
    <source>
    </source>
</evidence>
<evidence type="ECO:0000269" key="8">
    <source>
    </source>
</evidence>
<evidence type="ECO:0000269" key="9">
    <source>
    </source>
</evidence>
<evidence type="ECO:0000269" key="10">
    <source>
    </source>
</evidence>
<evidence type="ECO:0000269" key="11">
    <source>
    </source>
</evidence>
<evidence type="ECO:0000269" key="12">
    <source>
    </source>
</evidence>
<evidence type="ECO:0000269" key="13">
    <source>
    </source>
</evidence>
<evidence type="ECO:0000269" key="14">
    <source>
    </source>
</evidence>
<evidence type="ECO:0000269" key="15">
    <source>
    </source>
</evidence>
<evidence type="ECO:0000269" key="16">
    <source>
    </source>
</evidence>
<evidence type="ECO:0000269" key="17">
    <source>
    </source>
</evidence>
<evidence type="ECO:0000269" key="18">
    <source>
    </source>
</evidence>
<evidence type="ECO:0000269" key="19">
    <source>
    </source>
</evidence>
<evidence type="ECO:0000305" key="20"/>
<evidence type="ECO:0007744" key="21">
    <source>
        <dbReference type="PDB" id="3JAG"/>
    </source>
</evidence>
<evidence type="ECO:0007744" key="22">
    <source>
        <dbReference type="PDB" id="3JAH"/>
    </source>
</evidence>
<evidence type="ECO:0007744" key="23">
    <source>
        <dbReference type="PDB" id="4D5L"/>
    </source>
</evidence>
<evidence type="ECO:0007744" key="24">
    <source>
        <dbReference type="PDB" id="4D61"/>
    </source>
</evidence>
<evidence type="ECO:0007744" key="25">
    <source>
        <dbReference type="PDB" id="4KZX"/>
    </source>
</evidence>
<evidence type="ECO:0007744" key="26">
    <source>
        <dbReference type="PDB" id="4KZY"/>
    </source>
</evidence>
<evidence type="ECO:0007744" key="27">
    <source>
        <dbReference type="PDB" id="5LZS"/>
    </source>
</evidence>
<evidence type="ECO:0007744" key="28">
    <source>
        <dbReference type="PDB" id="5LZT"/>
    </source>
</evidence>
<evidence type="ECO:0007744" key="29">
    <source>
        <dbReference type="PDB" id="6D90"/>
    </source>
</evidence>
<evidence type="ECO:0007744" key="30">
    <source>
        <dbReference type="PDB" id="6D9J"/>
    </source>
</evidence>
<evidence type="ECO:0007744" key="31">
    <source>
        <dbReference type="PDB" id="6GZ3"/>
    </source>
</evidence>
<evidence type="ECO:0007744" key="32">
    <source>
        <dbReference type="PDB" id="6HCF"/>
    </source>
</evidence>
<evidence type="ECO:0007744" key="33">
    <source>
        <dbReference type="PDB" id="6HCJ"/>
    </source>
</evidence>
<evidence type="ECO:0007744" key="34">
    <source>
        <dbReference type="PDB" id="6MTB"/>
    </source>
</evidence>
<evidence type="ECO:0007744" key="35">
    <source>
        <dbReference type="PDB" id="6MTC"/>
    </source>
</evidence>
<evidence type="ECO:0007744" key="36">
    <source>
        <dbReference type="PDB" id="6P5I"/>
    </source>
</evidence>
<evidence type="ECO:0007744" key="37">
    <source>
        <dbReference type="PDB" id="6P5J"/>
    </source>
</evidence>
<evidence type="ECO:0007744" key="38">
    <source>
        <dbReference type="PDB" id="6R5Q"/>
    </source>
</evidence>
<evidence type="ECO:0007744" key="39">
    <source>
        <dbReference type="PDB" id="6R6G"/>
    </source>
</evidence>
<evidence type="ECO:0007744" key="40">
    <source>
        <dbReference type="PDB" id="6SGC"/>
    </source>
</evidence>
<evidence type="ECO:0007744" key="41">
    <source>
        <dbReference type="PDB" id="6W2S"/>
    </source>
</evidence>
<evidence type="ECO:0007744" key="42">
    <source>
        <dbReference type="PDB" id="6W2T"/>
    </source>
</evidence>
<evidence type="ECO:0007744" key="43">
    <source>
        <dbReference type="PDB" id="6ZVK"/>
    </source>
</evidence>
<evidence type="ECO:0007744" key="44">
    <source>
        <dbReference type="PDB" id="7A01"/>
    </source>
</evidence>
<evidence type="ECO:0007744" key="45">
    <source>
        <dbReference type="PDB" id="7OYD"/>
    </source>
</evidence>
<evidence type="ECO:0007744" key="46">
    <source>
        <dbReference type="PDB" id="7SYO"/>
    </source>
</evidence>
<evidence type="ECO:0007744" key="47">
    <source>
        <dbReference type="PDB" id="7SYP"/>
    </source>
</evidence>
<evidence type="ECO:0007744" key="48">
    <source>
        <dbReference type="PDB" id="7UCJ"/>
    </source>
</evidence>
<evidence type="ECO:0007744" key="49">
    <source>
        <dbReference type="PDB" id="7UCK"/>
    </source>
</evidence>
<evidence type="ECO:0007829" key="50">
    <source>
        <dbReference type="PDB" id="7JQB"/>
    </source>
</evidence>
<feature type="chain" id="PRO_0000460075" description="Small ribosomal subunit protein eS25">
    <location>
        <begin position="1"/>
        <end position="124"/>
    </location>
</feature>
<feature type="region of interest" description="Disordered" evidence="3">
    <location>
        <begin position="1"/>
        <end position="37"/>
    </location>
</feature>
<feature type="compositionally biased region" description="Basic and acidic residues" evidence="3">
    <location>
        <begin position="1"/>
        <end position="22"/>
    </location>
</feature>
<feature type="compositionally biased region" description="Basic residues" evidence="3">
    <location>
        <begin position="27"/>
        <end position="37"/>
    </location>
</feature>
<feature type="modified residue" description="N6-acetyllysine" evidence="2">
    <location>
        <position position="42"/>
    </location>
</feature>
<feature type="modified residue" description="N6-acetyllysine; alternate" evidence="1">
    <location>
        <position position="51"/>
    </location>
</feature>
<feature type="modified residue" description="N6-succinyllysine; alternate" evidence="2">
    <location>
        <position position="51"/>
    </location>
</feature>
<feature type="modified residue" description="N6-acetyllysine" evidence="1">
    <location>
        <position position="59"/>
    </location>
</feature>
<feature type="modified residue" description="N6-acetyllysine" evidence="1">
    <location>
        <position position="65"/>
    </location>
</feature>
<feature type="modified residue" description="N6-acetyllysine; alternate" evidence="1">
    <location>
        <position position="93"/>
    </location>
</feature>
<feature type="modified residue" description="N6-succinyllysine; alternate" evidence="2">
    <location>
        <position position="93"/>
    </location>
</feature>
<feature type="strand" evidence="50">
    <location>
        <begin position="46"/>
        <end position="49"/>
    </location>
</feature>
<feature type="turn" evidence="50">
    <location>
        <begin position="51"/>
        <end position="53"/>
    </location>
</feature>
<feature type="helix" evidence="50">
    <location>
        <begin position="54"/>
        <end position="57"/>
    </location>
</feature>
<feature type="helix" evidence="50">
    <location>
        <begin position="61"/>
        <end position="63"/>
    </location>
</feature>
<feature type="strand" evidence="50">
    <location>
        <begin position="64"/>
        <end position="67"/>
    </location>
</feature>
<feature type="helix" evidence="50">
    <location>
        <begin position="69"/>
        <end position="76"/>
    </location>
</feature>
<feature type="helix" evidence="50">
    <location>
        <begin position="80"/>
        <end position="92"/>
    </location>
</feature>
<feature type="strand" evidence="50">
    <location>
        <begin position="95"/>
        <end position="101"/>
    </location>
</feature>
<feature type="strand" evidence="50">
    <location>
        <begin position="106"/>
        <end position="109"/>
    </location>
</feature>
<accession>G1TDB3</accession>